<feature type="chain" id="PRO_0000352092" description="Small ribosomal subunit protein uS2c">
    <location>
        <begin position="1"/>
        <end position="236"/>
    </location>
</feature>
<reference key="1">
    <citation type="submission" date="2007-03" db="EMBL/GenBank/DDBJ databases">
        <title>Sequencing analysis of Arabis hirsuta chloroplast DNA.</title>
        <authorList>
            <person name="Hosouchi T."/>
            <person name="Tsuruoka H."/>
            <person name="Kotani H."/>
        </authorList>
    </citation>
    <scope>NUCLEOTIDE SEQUENCE [LARGE SCALE GENOMIC DNA]</scope>
</reference>
<sequence length="236" mass="26904">MTKRYWNIDLEEMMRAGVHFGHGTRKWNPRMAPYISAKRKGIHIINLTRTARFLSEACDLVFDAASRGKQFLIVGTKNKAADLVSRAAIRARCHYVNKKWLGGMLTNWSTTEKRLHKFRDLRTEQKTEGFNRLPKRDAAVLKRQLSRLETYLGGIKYMTGLPDIVIIIDQQEEYTALRECITLGIPTISLIDTNCNPDLADISIPANDDAIASIRFILNKLVFAICEGRSSYIQNS</sequence>
<name>RR2_ARAHI</name>
<dbReference type="EMBL" id="AP009369">
    <property type="protein sequence ID" value="BAF50012.1"/>
    <property type="molecule type" value="Genomic_DNA"/>
</dbReference>
<dbReference type="RefSeq" id="YP_001123188.1">
    <property type="nucleotide sequence ID" value="NC_009268.1"/>
</dbReference>
<dbReference type="SMR" id="A4QK07"/>
<dbReference type="GeneID" id="4962570"/>
<dbReference type="GO" id="GO:0009507">
    <property type="term" value="C:chloroplast"/>
    <property type="evidence" value="ECO:0007669"/>
    <property type="project" value="UniProtKB-SubCell"/>
</dbReference>
<dbReference type="GO" id="GO:0005763">
    <property type="term" value="C:mitochondrial small ribosomal subunit"/>
    <property type="evidence" value="ECO:0007669"/>
    <property type="project" value="TreeGrafter"/>
</dbReference>
<dbReference type="GO" id="GO:0003735">
    <property type="term" value="F:structural constituent of ribosome"/>
    <property type="evidence" value="ECO:0007669"/>
    <property type="project" value="InterPro"/>
</dbReference>
<dbReference type="GO" id="GO:0006412">
    <property type="term" value="P:translation"/>
    <property type="evidence" value="ECO:0007669"/>
    <property type="project" value="UniProtKB-UniRule"/>
</dbReference>
<dbReference type="CDD" id="cd01425">
    <property type="entry name" value="RPS2"/>
    <property type="match status" value="1"/>
</dbReference>
<dbReference type="FunFam" id="3.40.50.10490:FF:000101">
    <property type="match status" value="1"/>
</dbReference>
<dbReference type="FunFam" id="1.10.287.610:FF:000001">
    <property type="entry name" value="30S ribosomal protein S2"/>
    <property type="match status" value="1"/>
</dbReference>
<dbReference type="Gene3D" id="3.40.50.10490">
    <property type="entry name" value="Glucose-6-phosphate isomerase like protein, domain 1"/>
    <property type="match status" value="1"/>
</dbReference>
<dbReference type="Gene3D" id="1.10.287.610">
    <property type="entry name" value="Helix hairpin bin"/>
    <property type="match status" value="1"/>
</dbReference>
<dbReference type="HAMAP" id="MF_00291_B">
    <property type="entry name" value="Ribosomal_uS2_B"/>
    <property type="match status" value="1"/>
</dbReference>
<dbReference type="InterPro" id="IPR001865">
    <property type="entry name" value="Ribosomal_uS2"/>
</dbReference>
<dbReference type="InterPro" id="IPR005706">
    <property type="entry name" value="Ribosomal_uS2_bac/mit/plastid"/>
</dbReference>
<dbReference type="InterPro" id="IPR018130">
    <property type="entry name" value="Ribosomal_uS2_CS"/>
</dbReference>
<dbReference type="InterPro" id="IPR023591">
    <property type="entry name" value="Ribosomal_uS2_flav_dom_sf"/>
</dbReference>
<dbReference type="NCBIfam" id="TIGR01011">
    <property type="entry name" value="rpsB_bact"/>
    <property type="match status" value="1"/>
</dbReference>
<dbReference type="PANTHER" id="PTHR12534">
    <property type="entry name" value="30S RIBOSOMAL PROTEIN S2 PROKARYOTIC AND ORGANELLAR"/>
    <property type="match status" value="1"/>
</dbReference>
<dbReference type="PANTHER" id="PTHR12534:SF0">
    <property type="entry name" value="SMALL RIBOSOMAL SUBUNIT PROTEIN US2M"/>
    <property type="match status" value="1"/>
</dbReference>
<dbReference type="Pfam" id="PF00318">
    <property type="entry name" value="Ribosomal_S2"/>
    <property type="match status" value="1"/>
</dbReference>
<dbReference type="PRINTS" id="PR00395">
    <property type="entry name" value="RIBOSOMALS2"/>
</dbReference>
<dbReference type="SUPFAM" id="SSF52313">
    <property type="entry name" value="Ribosomal protein S2"/>
    <property type="match status" value="1"/>
</dbReference>
<dbReference type="PROSITE" id="PS00962">
    <property type="entry name" value="RIBOSOMAL_S2_1"/>
    <property type="match status" value="1"/>
</dbReference>
<dbReference type="PROSITE" id="PS00963">
    <property type="entry name" value="RIBOSOMAL_S2_2"/>
    <property type="match status" value="1"/>
</dbReference>
<protein>
    <recommendedName>
        <fullName evidence="1">Small ribosomal subunit protein uS2c</fullName>
    </recommendedName>
    <alternativeName>
        <fullName>30S ribosomal protein S2, chloroplastic</fullName>
    </alternativeName>
</protein>
<organism>
    <name type="scientific">Arabis hirsuta</name>
    <name type="common">Hairy rock-cress</name>
    <name type="synonym">Turritis hirsuta</name>
    <dbReference type="NCBI Taxonomy" id="78191"/>
    <lineage>
        <taxon>Eukaryota</taxon>
        <taxon>Viridiplantae</taxon>
        <taxon>Streptophyta</taxon>
        <taxon>Embryophyta</taxon>
        <taxon>Tracheophyta</taxon>
        <taxon>Spermatophyta</taxon>
        <taxon>Magnoliopsida</taxon>
        <taxon>eudicotyledons</taxon>
        <taxon>Gunneridae</taxon>
        <taxon>Pentapetalae</taxon>
        <taxon>rosids</taxon>
        <taxon>malvids</taxon>
        <taxon>Brassicales</taxon>
        <taxon>Brassicaceae</taxon>
        <taxon>Arabideae</taxon>
        <taxon>Arabis</taxon>
    </lineage>
</organism>
<comment type="subcellular location">
    <subcellularLocation>
        <location>Plastid</location>
        <location>Chloroplast</location>
    </subcellularLocation>
</comment>
<comment type="similarity">
    <text evidence="1">Belongs to the universal ribosomal protein uS2 family.</text>
</comment>
<gene>
    <name type="primary">rps2</name>
</gene>
<evidence type="ECO:0000305" key="1"/>
<proteinExistence type="inferred from homology"/>
<accession>A4QK07</accession>
<geneLocation type="chloroplast"/>
<keyword id="KW-0150">Chloroplast</keyword>
<keyword id="KW-0934">Plastid</keyword>
<keyword id="KW-0687">Ribonucleoprotein</keyword>
<keyword id="KW-0689">Ribosomal protein</keyword>